<reference key="1">
    <citation type="journal article" date="2009" name="PLoS Biol.">
        <title>Lineage-specific biology revealed by a finished genome assembly of the mouse.</title>
        <authorList>
            <person name="Church D.M."/>
            <person name="Goodstadt L."/>
            <person name="Hillier L.W."/>
            <person name="Zody M.C."/>
            <person name="Goldstein S."/>
            <person name="She X."/>
            <person name="Bult C.J."/>
            <person name="Agarwala R."/>
            <person name="Cherry J.L."/>
            <person name="DiCuccio M."/>
            <person name="Hlavina W."/>
            <person name="Kapustin Y."/>
            <person name="Meric P."/>
            <person name="Maglott D."/>
            <person name="Birtle Z."/>
            <person name="Marques A.C."/>
            <person name="Graves T."/>
            <person name="Zhou S."/>
            <person name="Teague B."/>
            <person name="Potamousis K."/>
            <person name="Churas C."/>
            <person name="Place M."/>
            <person name="Herschleb J."/>
            <person name="Runnheim R."/>
            <person name="Forrest D."/>
            <person name="Amos-Landgraf J."/>
            <person name="Schwartz D.C."/>
            <person name="Cheng Z."/>
            <person name="Lindblad-Toh K."/>
            <person name="Eichler E.E."/>
            <person name="Ponting C.P."/>
        </authorList>
    </citation>
    <scope>NUCLEOTIDE SEQUENCE [LARGE SCALE GENOMIC DNA]</scope>
    <source>
        <strain>C57BL/6J</strain>
    </source>
</reference>
<reference key="2">
    <citation type="journal article" date="2004" name="Genome Res.">
        <title>The status, quality, and expansion of the NIH full-length cDNA project: the Mammalian Gene Collection (MGC).</title>
        <authorList>
            <consortium name="The MGC Project Team"/>
        </authorList>
    </citation>
    <scope>NUCLEOTIDE SEQUENCE [LARGE SCALE MRNA] (ISOFORM 2)</scope>
    <scope>NUCLEOTIDE SEQUENCE [LARGE SCALE MRNA] OF 33-298 (ISOFORM 1)</scope>
    <source>
        <strain>FVB/N</strain>
        <tissue>Colon</tissue>
        <tissue>Eye</tissue>
    </source>
</reference>
<reference key="3">
    <citation type="submission" date="1996-07" db="EMBL/GenBank/DDBJ databases">
        <authorList>
            <person name="Sugihara T."/>
        </authorList>
    </citation>
    <scope>NUCLEOTIDE SEQUENCE [MRNA] OF 33-298 (ISOFORM 1)</scope>
    <source>
        <strain>CD-1 X ICR</strain>
    </source>
</reference>
<reference key="4">
    <citation type="journal article" date="2010" name="Cell">
        <title>A tissue-specific atlas of mouse protein phosphorylation and expression.</title>
        <authorList>
            <person name="Huttlin E.L."/>
            <person name="Jedrychowski M.P."/>
            <person name="Elias J.E."/>
            <person name="Goswami T."/>
            <person name="Rad R."/>
            <person name="Beausoleil S.A."/>
            <person name="Villen J."/>
            <person name="Haas W."/>
            <person name="Sowa M.E."/>
            <person name="Gygi S.P."/>
        </authorList>
    </citation>
    <scope>IDENTIFICATION BY MASS SPECTROMETRY [LARGE SCALE ANALYSIS]</scope>
    <source>
        <tissue>Brain</tissue>
        <tissue>Brown adipose tissue</tissue>
        <tissue>Heart</tissue>
        <tissue>Kidney</tissue>
        <tissue>Liver</tissue>
        <tissue>Pancreas</tissue>
        <tissue>Spleen</tissue>
        <tissue>Testis</tissue>
    </source>
</reference>
<reference key="5">
    <citation type="journal article" date="2014" name="Mol. Cell. Proteomics">
        <title>Immunoaffinity enrichment and mass spectrometry analysis of protein methylation.</title>
        <authorList>
            <person name="Guo A."/>
            <person name="Gu H."/>
            <person name="Zhou J."/>
            <person name="Mulhern D."/>
            <person name="Wang Y."/>
            <person name="Lee K.A."/>
            <person name="Yang V."/>
            <person name="Aguiar M."/>
            <person name="Kornhauser J."/>
            <person name="Jia X."/>
            <person name="Ren J."/>
            <person name="Beausoleil S.A."/>
            <person name="Silva J.C."/>
            <person name="Vemulapalli V."/>
            <person name="Bedford M.T."/>
            <person name="Comb M.J."/>
        </authorList>
    </citation>
    <scope>IDENTIFICATION BY MASS SPECTROMETRY [LARGE SCALE ANALYSIS]</scope>
</reference>
<protein>
    <recommendedName>
        <fullName>UPF0696 protein C11orf68 homolog</fullName>
    </recommendedName>
    <alternativeName>
        <fullName>Basophilic leukemia-expressed protein Bles03</fullName>
    </alternativeName>
    <alternativeName>
        <fullName>Protein WF-3</fullName>
    </alternativeName>
</protein>
<dbReference type="EMBL" id="AC122861">
    <property type="status" value="NOT_ANNOTATED_CDS"/>
    <property type="molecule type" value="Genomic_DNA"/>
</dbReference>
<dbReference type="EMBL" id="BC017542">
    <property type="protein sequence ID" value="AAH17542.1"/>
    <property type="molecule type" value="mRNA"/>
</dbReference>
<dbReference type="EMBL" id="BC024516">
    <property type="protein sequence ID" value="AAH24516.1"/>
    <property type="status" value="ALT_SEQ"/>
    <property type="molecule type" value="mRNA"/>
</dbReference>
<dbReference type="EMBL" id="U64690">
    <property type="protein sequence ID" value="AAR00571.1"/>
    <property type="molecule type" value="mRNA"/>
</dbReference>
<dbReference type="CCDS" id="CCDS29463.2">
    <molecule id="Q8VD62-2"/>
</dbReference>
<dbReference type="CCDS" id="CCDS89308.1">
    <molecule id="Q8VD62-1"/>
</dbReference>
<dbReference type="RefSeq" id="NP_001243444.1">
    <molecule id="Q8VD62-1"/>
    <property type="nucleotide sequence ID" value="NM_001256515.1"/>
</dbReference>
<dbReference type="RefSeq" id="NP_598910.2">
    <molecule id="Q8VD62-2"/>
    <property type="nucleotide sequence ID" value="NM_134149.2"/>
</dbReference>
<dbReference type="SMR" id="Q8VD62"/>
<dbReference type="BioGRID" id="223223">
    <property type="interactions" value="65"/>
</dbReference>
<dbReference type="FunCoup" id="Q8VD62">
    <property type="interactions" value="92"/>
</dbReference>
<dbReference type="IntAct" id="Q8VD62">
    <property type="interactions" value="65"/>
</dbReference>
<dbReference type="STRING" id="10090.ENSMUSP00000125651"/>
<dbReference type="GlyGen" id="Q8VD62">
    <property type="glycosylation" value="2 sites, 1 O-linked glycan (1 site)"/>
</dbReference>
<dbReference type="iPTMnet" id="Q8VD62"/>
<dbReference type="PhosphoSitePlus" id="Q8VD62"/>
<dbReference type="SwissPalm" id="Q8VD62"/>
<dbReference type="jPOST" id="Q8VD62"/>
<dbReference type="PaxDb" id="10090-ENSMUSP00000125651"/>
<dbReference type="ProteomicsDB" id="283504">
    <molecule id="Q8VD62-2"/>
</dbReference>
<dbReference type="ProteomicsDB" id="357875"/>
<dbReference type="Pumba" id="Q8VD62"/>
<dbReference type="Antibodypedia" id="51800">
    <property type="antibodies" value="42 antibodies from 12 providers"/>
</dbReference>
<dbReference type="DNASU" id="107242"/>
<dbReference type="Ensembl" id="ENSMUST00000054477.8">
    <molecule id="Q8VD62-1"/>
    <property type="protein sequence ID" value="ENSMUSP00000158508.2"/>
    <property type="gene ID" value="ENSMUSG00000047423.11"/>
</dbReference>
<dbReference type="Ensembl" id="ENSMUST00000159759.3">
    <molecule id="Q8VD62-2"/>
    <property type="protein sequence ID" value="ENSMUSP00000125651.2"/>
    <property type="gene ID" value="ENSMUSG00000047423.11"/>
</dbReference>
<dbReference type="GeneID" id="107242"/>
<dbReference type="KEGG" id="mmu:107242"/>
<dbReference type="AGR" id="MGI:2147598"/>
<dbReference type="MGI" id="MGI:2147598">
    <property type="gene designation" value="AI837181"/>
</dbReference>
<dbReference type="VEuPathDB" id="HostDB:ENSMUSG00000047423"/>
<dbReference type="eggNOG" id="ENOG502QRQJ">
    <property type="taxonomic scope" value="Eukaryota"/>
</dbReference>
<dbReference type="GeneTree" id="ENSGT00390000011640"/>
<dbReference type="HOGENOM" id="CLU_051869_1_0_1"/>
<dbReference type="InParanoid" id="Q8VD62"/>
<dbReference type="OMA" id="WIAIYGP"/>
<dbReference type="OrthoDB" id="10067381at2759"/>
<dbReference type="PhylomeDB" id="Q8VD62"/>
<dbReference type="TreeFam" id="TF331797"/>
<dbReference type="BioGRID-ORCS" id="107242">
    <property type="hits" value="3 hits in 76 CRISPR screens"/>
</dbReference>
<dbReference type="ChiTaRS" id="AI837181">
    <property type="organism name" value="mouse"/>
</dbReference>
<dbReference type="PRO" id="PR:Q8VD62"/>
<dbReference type="Proteomes" id="UP000000589">
    <property type="component" value="Chromosome 19"/>
</dbReference>
<dbReference type="RNAct" id="Q8VD62">
    <property type="molecule type" value="protein"/>
</dbReference>
<dbReference type="Bgee" id="ENSMUSG00000047423">
    <property type="expression patterns" value="Expressed in embryonic brain and 241 other cell types or tissues"/>
</dbReference>
<dbReference type="FunFam" id="3.30.760.10:FF:000005">
    <property type="entry name" value="UPF0696 protein C11orf68 homolog"/>
    <property type="match status" value="1"/>
</dbReference>
<dbReference type="Gene3D" id="3.30.760.10">
    <property type="entry name" value="RNA Cap, Translation Initiation Factor Eif4e"/>
    <property type="match status" value="1"/>
</dbReference>
<dbReference type="InterPro" id="IPR015034">
    <property type="entry name" value="Bles03"/>
</dbReference>
<dbReference type="InterPro" id="IPR023398">
    <property type="entry name" value="TIF_eIF4e-like"/>
</dbReference>
<dbReference type="PANTHER" id="PTHR31977">
    <property type="entry name" value="UPF0696 PROTEIN C11ORF68"/>
    <property type="match status" value="1"/>
</dbReference>
<dbReference type="PANTHER" id="PTHR31977:SF1">
    <property type="entry name" value="UPF0696 PROTEIN C11ORF68"/>
    <property type="match status" value="1"/>
</dbReference>
<dbReference type="Pfam" id="PF08939">
    <property type="entry name" value="Bles03"/>
    <property type="match status" value="1"/>
</dbReference>
<dbReference type="SUPFAM" id="SSF55418">
    <property type="entry name" value="eIF4e-like"/>
    <property type="match status" value="1"/>
</dbReference>
<organism>
    <name type="scientific">Mus musculus</name>
    <name type="common">Mouse</name>
    <dbReference type="NCBI Taxonomy" id="10090"/>
    <lineage>
        <taxon>Eukaryota</taxon>
        <taxon>Metazoa</taxon>
        <taxon>Chordata</taxon>
        <taxon>Craniata</taxon>
        <taxon>Vertebrata</taxon>
        <taxon>Euteleostomi</taxon>
        <taxon>Mammalia</taxon>
        <taxon>Eutheria</taxon>
        <taxon>Euarchontoglires</taxon>
        <taxon>Glires</taxon>
        <taxon>Rodentia</taxon>
        <taxon>Myomorpha</taxon>
        <taxon>Muroidea</taxon>
        <taxon>Muridae</taxon>
        <taxon>Murinae</taxon>
        <taxon>Mus</taxon>
        <taxon>Mus</taxon>
    </lineage>
</organism>
<feature type="chain" id="PRO_0000228118" description="UPF0696 protein C11orf68 homolog">
    <location>
        <begin position="1"/>
        <end position="298"/>
    </location>
</feature>
<feature type="region of interest" description="Disordered" evidence="1">
    <location>
        <begin position="1"/>
        <end position="66"/>
    </location>
</feature>
<feature type="compositionally biased region" description="Low complexity" evidence="1">
    <location>
        <begin position="1"/>
        <end position="10"/>
    </location>
</feature>
<feature type="compositionally biased region" description="Gly residues" evidence="1">
    <location>
        <begin position="11"/>
        <end position="25"/>
    </location>
</feature>
<feature type="compositionally biased region" description="Basic and acidic residues" evidence="1">
    <location>
        <begin position="41"/>
        <end position="50"/>
    </location>
</feature>
<feature type="splice variant" id="VSP_059973" description="In isoform 1.">
    <original>RMEPNEELEEEDSPGGREDGFTAEHLAAEAMAADMDPWLVFDARTTPATELDAWLAKYPPSQVTRYGDPGSPNSEPVGWIAAYGQGYTPNSGDVQGLQAAWEALQTSGRPITPGTLRQLAITHHVLSGKWLIHLS</original>
    <variation>SSLTTGWNQMRSWKRKTLQVAGRMASLLSTWLQRPWQPIWTPGWYLMPVPHLPQSWMPGWPSTHHLKLLAMGTQVHPTLNLWAGLQPMGRVTPPTQGMYKGCRRPGRLCRPVGDPSHQVPCASWPSPTMCSPASG</variation>
    <location>
        <begin position="47"/>
        <end position="181"/>
    </location>
</feature>
<feature type="splice variant" id="VSP_059974" description="In isoform 1.">
    <location>
        <begin position="182"/>
        <end position="298"/>
    </location>
</feature>
<feature type="sequence conflict" description="In Ref. 3; AAR00571." evidence="2" ref="3">
    <original>A</original>
    <variation>G</variation>
    <location>
        <position position="79"/>
    </location>
</feature>
<evidence type="ECO:0000256" key="1">
    <source>
        <dbReference type="SAM" id="MobiDB-lite"/>
    </source>
</evidence>
<evidence type="ECO:0000305" key="2"/>
<sequence>MAAAAAAVAGAGRGGGGGGGGGGAADPGQERSRARSWVGAERSEGRRMEPNEELEEEDSPGGREDGFTAEHLAAEAMAADMDPWLVFDARTTPATELDAWLAKYPPSQVTRYGDPGSPNSEPVGWIAAYGQGYTPNSGDVQGLQAAWEALQTSGRPITPGTLRQLAITHHVLSGKWLIHLSPGFKLDHAWAGIARAVVEGRLQVAKVSPRAKEGGRQVICVYTDDFTDRLGVLEADSAIRAAGIKCLLTYKPDVYTYLGIYRANRWHLCPTLYESRFQLGGNTRGSRVLDRANNVELT</sequence>
<gene>
    <name type="primary">Bles03</name>
</gene>
<comment type="alternative products">
    <event type="alternative splicing"/>
    <isoform>
        <id>Q8VD62-2</id>
        <name>2</name>
        <sequence type="displayed"/>
    </isoform>
    <isoform>
        <id>Q8VD62-1</id>
        <name>1</name>
        <sequence type="described" ref="VSP_059973 VSP_059974"/>
    </isoform>
</comment>
<comment type="similarity">
    <text evidence="2">Belongs to the UPF0696 family.</text>
</comment>
<comment type="sequence caution" evidence="2">
    <conflict type="erroneous translation">
        <sequence resource="EMBL-CDS" id="AAH24516"/>
    </conflict>
    <text>Wrong choice of frame.</text>
</comment>
<name>CK068_MOUSE</name>
<proteinExistence type="evidence at protein level"/>
<keyword id="KW-0025">Alternative splicing</keyword>
<keyword id="KW-1185">Reference proteome</keyword>
<accession>Q8VD62</accession>
<accession>E9QNR6</accession>
<accession>Q6LCE3</accession>